<name>URE2_MICLC</name>
<reference key="1">
    <citation type="journal article" date="2010" name="J. Bacteriol.">
        <title>Genome sequence of the Fleming strain of Micrococcus luteus, a simple free-living actinobacterium.</title>
        <authorList>
            <person name="Young M."/>
            <person name="Artsatbanov V."/>
            <person name="Beller H.R."/>
            <person name="Chandra G."/>
            <person name="Chater K.F."/>
            <person name="Dover L.G."/>
            <person name="Goh E.B."/>
            <person name="Kahan T."/>
            <person name="Kaprelyants A.S."/>
            <person name="Kyrpides N."/>
            <person name="Lapidus A."/>
            <person name="Lowry S.R."/>
            <person name="Lykidis A."/>
            <person name="Mahillon J."/>
            <person name="Markowitz V."/>
            <person name="Mavromatis K."/>
            <person name="Mukamolova G.V."/>
            <person name="Oren A."/>
            <person name="Rokem J.S."/>
            <person name="Smith M.C."/>
            <person name="Young D.I."/>
            <person name="Greenblatt C.L."/>
        </authorList>
    </citation>
    <scope>NUCLEOTIDE SEQUENCE [LARGE SCALE GENOMIC DNA]</scope>
    <source>
        <strain>ATCC 4698 / DSM 20030 / JCM 1464 / CCM 169 / CCUG 5858 / IAM 1056 / NBRC 3333 / NCIMB 9278 / NCTC 2665 / VKM Ac-2230</strain>
    </source>
</reference>
<evidence type="ECO:0000255" key="1">
    <source>
        <dbReference type="HAMAP-Rule" id="MF_01954"/>
    </source>
</evidence>
<evidence type="ECO:0000256" key="2">
    <source>
        <dbReference type="SAM" id="MobiDB-lite"/>
    </source>
</evidence>
<comment type="catalytic activity">
    <reaction evidence="1">
        <text>urea + 2 H2O + H(+) = hydrogencarbonate + 2 NH4(+)</text>
        <dbReference type="Rhea" id="RHEA:20557"/>
        <dbReference type="ChEBI" id="CHEBI:15377"/>
        <dbReference type="ChEBI" id="CHEBI:15378"/>
        <dbReference type="ChEBI" id="CHEBI:16199"/>
        <dbReference type="ChEBI" id="CHEBI:17544"/>
        <dbReference type="ChEBI" id="CHEBI:28938"/>
        <dbReference type="EC" id="3.5.1.5"/>
    </reaction>
</comment>
<comment type="pathway">
    <text evidence="1">Nitrogen metabolism; urea degradation; CO(2) and NH(3) from urea (urease route): step 1/1.</text>
</comment>
<comment type="subunit">
    <text evidence="1">Heterotrimer of UreA (gamma), UreB (beta) and UreC (alpha) subunits. Three heterotrimers associate to form the active enzyme.</text>
</comment>
<comment type="subcellular location">
    <subcellularLocation>
        <location evidence="1">Cytoplasm</location>
    </subcellularLocation>
</comment>
<comment type="similarity">
    <text evidence="1">Belongs to the urease beta subunit family.</text>
</comment>
<proteinExistence type="inferred from homology"/>
<organism>
    <name type="scientific">Micrococcus luteus (strain ATCC 4698 / DSM 20030 / JCM 1464 / CCM 169 / CCUG 5858 / IAM 1056 / NBRC 3333 / NCIMB 9278 / NCTC 2665 / VKM Ac-2230)</name>
    <name type="common">Micrococcus lysodeikticus</name>
    <dbReference type="NCBI Taxonomy" id="465515"/>
    <lineage>
        <taxon>Bacteria</taxon>
        <taxon>Bacillati</taxon>
        <taxon>Actinomycetota</taxon>
        <taxon>Actinomycetes</taxon>
        <taxon>Micrococcales</taxon>
        <taxon>Micrococcaceae</taxon>
        <taxon>Micrococcus</taxon>
    </lineage>
</organism>
<accession>C5C8U2</accession>
<keyword id="KW-0963">Cytoplasm</keyword>
<keyword id="KW-0378">Hydrolase</keyword>
<keyword id="KW-1185">Reference proteome</keyword>
<sequence length="144" mass="15277">MKPGEYVLADAPVVCNRGREAVELSVTNRGDRPVQVGSHFHFAEANRALDFDRQAALGCRLDIPAGTAVRLEPGDETTVKLIPLGGDRVVYGFRDMVDGSLDPHEAAGLHAAPAAPAIPARHESAAGDAPSPLKERAGFDNETR</sequence>
<feature type="chain" id="PRO_1000216203" description="Urease subunit beta">
    <location>
        <begin position="1"/>
        <end position="144"/>
    </location>
</feature>
<feature type="region of interest" description="Disordered" evidence="2">
    <location>
        <begin position="110"/>
        <end position="144"/>
    </location>
</feature>
<feature type="compositionally biased region" description="Low complexity" evidence="2">
    <location>
        <begin position="110"/>
        <end position="119"/>
    </location>
</feature>
<feature type="compositionally biased region" description="Basic and acidic residues" evidence="2">
    <location>
        <begin position="133"/>
        <end position="144"/>
    </location>
</feature>
<dbReference type="EC" id="3.5.1.5" evidence="1"/>
<dbReference type="EMBL" id="CP001628">
    <property type="protein sequence ID" value="ACS29894.1"/>
    <property type="molecule type" value="Genomic_DNA"/>
</dbReference>
<dbReference type="RefSeq" id="WP_010079478.1">
    <property type="nucleotide sequence ID" value="NC_012803.1"/>
</dbReference>
<dbReference type="SMR" id="C5C8U2"/>
<dbReference type="STRING" id="465515.Mlut_03430"/>
<dbReference type="EnsemblBacteria" id="ACS29894">
    <property type="protein sequence ID" value="ACS29894"/>
    <property type="gene ID" value="Mlut_03430"/>
</dbReference>
<dbReference type="GeneID" id="93344522"/>
<dbReference type="KEGG" id="mlu:Mlut_03430"/>
<dbReference type="eggNOG" id="COG0832">
    <property type="taxonomic scope" value="Bacteria"/>
</dbReference>
<dbReference type="HOGENOM" id="CLU_129707_1_0_11"/>
<dbReference type="UniPathway" id="UPA00258">
    <property type="reaction ID" value="UER00370"/>
</dbReference>
<dbReference type="Proteomes" id="UP000000738">
    <property type="component" value="Chromosome"/>
</dbReference>
<dbReference type="GO" id="GO:0035550">
    <property type="term" value="C:urease complex"/>
    <property type="evidence" value="ECO:0007669"/>
    <property type="project" value="InterPro"/>
</dbReference>
<dbReference type="GO" id="GO:0009039">
    <property type="term" value="F:urease activity"/>
    <property type="evidence" value="ECO:0007669"/>
    <property type="project" value="UniProtKB-UniRule"/>
</dbReference>
<dbReference type="GO" id="GO:0043419">
    <property type="term" value="P:urea catabolic process"/>
    <property type="evidence" value="ECO:0007669"/>
    <property type="project" value="UniProtKB-UniRule"/>
</dbReference>
<dbReference type="CDD" id="cd00407">
    <property type="entry name" value="Urease_beta"/>
    <property type="match status" value="1"/>
</dbReference>
<dbReference type="FunFam" id="2.10.150.10:FF:000001">
    <property type="entry name" value="Urease subunit beta"/>
    <property type="match status" value="1"/>
</dbReference>
<dbReference type="Gene3D" id="2.10.150.10">
    <property type="entry name" value="Urease, beta subunit"/>
    <property type="match status" value="1"/>
</dbReference>
<dbReference type="HAMAP" id="MF_01954">
    <property type="entry name" value="Urease_beta"/>
    <property type="match status" value="1"/>
</dbReference>
<dbReference type="InterPro" id="IPR002019">
    <property type="entry name" value="Urease_beta-like"/>
</dbReference>
<dbReference type="InterPro" id="IPR036461">
    <property type="entry name" value="Urease_betasu_sf"/>
</dbReference>
<dbReference type="InterPro" id="IPR050069">
    <property type="entry name" value="Urease_subunit"/>
</dbReference>
<dbReference type="NCBIfam" id="NF009682">
    <property type="entry name" value="PRK13203.1"/>
    <property type="match status" value="1"/>
</dbReference>
<dbReference type="NCBIfam" id="TIGR00192">
    <property type="entry name" value="urease_beta"/>
    <property type="match status" value="1"/>
</dbReference>
<dbReference type="PANTHER" id="PTHR33569">
    <property type="entry name" value="UREASE"/>
    <property type="match status" value="1"/>
</dbReference>
<dbReference type="PANTHER" id="PTHR33569:SF1">
    <property type="entry name" value="UREASE"/>
    <property type="match status" value="1"/>
</dbReference>
<dbReference type="Pfam" id="PF00699">
    <property type="entry name" value="Urease_beta"/>
    <property type="match status" value="1"/>
</dbReference>
<dbReference type="SUPFAM" id="SSF51278">
    <property type="entry name" value="Urease, beta-subunit"/>
    <property type="match status" value="1"/>
</dbReference>
<gene>
    <name evidence="1" type="primary">ureB</name>
    <name type="ordered locus">Mlut_03430</name>
</gene>
<protein>
    <recommendedName>
        <fullName evidence="1">Urease subunit beta</fullName>
        <ecNumber evidence="1">3.5.1.5</ecNumber>
    </recommendedName>
    <alternativeName>
        <fullName evidence="1">Urea amidohydrolase subunit beta</fullName>
    </alternativeName>
</protein>